<dbReference type="EMBL" id="CP000261">
    <property type="protein sequence ID" value="ABF36024.1"/>
    <property type="status" value="ALT_INIT"/>
    <property type="molecule type" value="Genomic_DNA"/>
</dbReference>
<dbReference type="SMR" id="Q1JBN4"/>
<dbReference type="KEGG" id="spj:MGAS2096_Spy0972"/>
<dbReference type="HOGENOM" id="CLU_027562_9_6_9"/>
<dbReference type="GO" id="GO:0005737">
    <property type="term" value="C:cytoplasm"/>
    <property type="evidence" value="ECO:0007669"/>
    <property type="project" value="UniProtKB-SubCell"/>
</dbReference>
<dbReference type="GO" id="GO:0003677">
    <property type="term" value="F:DNA binding"/>
    <property type="evidence" value="ECO:0007669"/>
    <property type="project" value="UniProtKB-KW"/>
</dbReference>
<dbReference type="GO" id="GO:0009037">
    <property type="term" value="F:tyrosine-based site-specific recombinase activity"/>
    <property type="evidence" value="ECO:0007669"/>
    <property type="project" value="UniProtKB-UniRule"/>
</dbReference>
<dbReference type="GO" id="GO:0051301">
    <property type="term" value="P:cell division"/>
    <property type="evidence" value="ECO:0007669"/>
    <property type="project" value="UniProtKB-KW"/>
</dbReference>
<dbReference type="GO" id="GO:0007059">
    <property type="term" value="P:chromosome segregation"/>
    <property type="evidence" value="ECO:0007669"/>
    <property type="project" value="UniProtKB-UniRule"/>
</dbReference>
<dbReference type="GO" id="GO:0006310">
    <property type="term" value="P:DNA recombination"/>
    <property type="evidence" value="ECO:0007669"/>
    <property type="project" value="UniProtKB-UniRule"/>
</dbReference>
<dbReference type="CDD" id="cd00397">
    <property type="entry name" value="DNA_BRE_C"/>
    <property type="match status" value="1"/>
</dbReference>
<dbReference type="Gene3D" id="1.10.150.130">
    <property type="match status" value="1"/>
</dbReference>
<dbReference type="Gene3D" id="1.10.443.10">
    <property type="entry name" value="Intergrase catalytic core"/>
    <property type="match status" value="1"/>
</dbReference>
<dbReference type="HAMAP" id="MF_01816">
    <property type="entry name" value="Recomb_XerS"/>
    <property type="match status" value="1"/>
</dbReference>
<dbReference type="InterPro" id="IPR044068">
    <property type="entry name" value="CB"/>
</dbReference>
<dbReference type="InterPro" id="IPR011010">
    <property type="entry name" value="DNA_brk_join_enz"/>
</dbReference>
<dbReference type="InterPro" id="IPR013762">
    <property type="entry name" value="Integrase-like_cat_sf"/>
</dbReference>
<dbReference type="InterPro" id="IPR002104">
    <property type="entry name" value="Integrase_catalytic"/>
</dbReference>
<dbReference type="InterPro" id="IPR010998">
    <property type="entry name" value="Integrase_recombinase_N"/>
</dbReference>
<dbReference type="InterPro" id="IPR004107">
    <property type="entry name" value="Integrase_SAM-like_N"/>
</dbReference>
<dbReference type="InterPro" id="IPR023670">
    <property type="entry name" value="Recomb_XerS"/>
</dbReference>
<dbReference type="InterPro" id="IPR050090">
    <property type="entry name" value="Tyrosine_recombinase_XerCD"/>
</dbReference>
<dbReference type="NCBIfam" id="NF003462">
    <property type="entry name" value="PRK05084.1"/>
    <property type="match status" value="1"/>
</dbReference>
<dbReference type="PANTHER" id="PTHR30349">
    <property type="entry name" value="PHAGE INTEGRASE-RELATED"/>
    <property type="match status" value="1"/>
</dbReference>
<dbReference type="PANTHER" id="PTHR30349:SF77">
    <property type="entry name" value="TYROSINE RECOMBINASE XERC"/>
    <property type="match status" value="1"/>
</dbReference>
<dbReference type="Pfam" id="PF02899">
    <property type="entry name" value="Phage_int_SAM_1"/>
    <property type="match status" value="1"/>
</dbReference>
<dbReference type="Pfam" id="PF00589">
    <property type="entry name" value="Phage_integrase"/>
    <property type="match status" value="1"/>
</dbReference>
<dbReference type="SUPFAM" id="SSF56349">
    <property type="entry name" value="DNA breaking-rejoining enzymes"/>
    <property type="match status" value="1"/>
</dbReference>
<dbReference type="PROSITE" id="PS51900">
    <property type="entry name" value="CB"/>
    <property type="match status" value="1"/>
</dbReference>
<dbReference type="PROSITE" id="PS51898">
    <property type="entry name" value="TYR_RECOMBINASE"/>
    <property type="match status" value="1"/>
</dbReference>
<protein>
    <recommendedName>
        <fullName evidence="1">Tyrosine recombinase XerS</fullName>
    </recommendedName>
</protein>
<reference key="1">
    <citation type="journal article" date="2006" name="Proc. Natl. Acad. Sci. U.S.A.">
        <title>Molecular genetic anatomy of inter- and intraserotype variation in the human bacterial pathogen group A Streptococcus.</title>
        <authorList>
            <person name="Beres S.B."/>
            <person name="Richter E.W."/>
            <person name="Nagiec M.J."/>
            <person name="Sumby P."/>
            <person name="Porcella S.F."/>
            <person name="DeLeo F.R."/>
            <person name="Musser J.M."/>
        </authorList>
    </citation>
    <scope>NUCLEOTIDE SEQUENCE [LARGE SCALE GENOMIC DNA]</scope>
    <source>
        <strain>MGAS2096</strain>
    </source>
</reference>
<organism>
    <name type="scientific">Streptococcus pyogenes serotype M12 (strain MGAS2096)</name>
    <dbReference type="NCBI Taxonomy" id="370553"/>
    <lineage>
        <taxon>Bacteria</taxon>
        <taxon>Bacillati</taxon>
        <taxon>Bacillota</taxon>
        <taxon>Bacilli</taxon>
        <taxon>Lactobacillales</taxon>
        <taxon>Streptococcaceae</taxon>
        <taxon>Streptococcus</taxon>
    </lineage>
</organism>
<accession>Q1JBN4</accession>
<name>XERS_STRPB</name>
<keyword id="KW-0131">Cell cycle</keyword>
<keyword id="KW-0132">Cell division</keyword>
<keyword id="KW-0159">Chromosome partition</keyword>
<keyword id="KW-0963">Cytoplasm</keyword>
<keyword id="KW-0229">DNA integration</keyword>
<keyword id="KW-0233">DNA recombination</keyword>
<keyword id="KW-0238">DNA-binding</keyword>
<proteinExistence type="inferred from homology"/>
<sequence>MRRELLLEKIETYKAIMPWYVLDYYQSKLAVPYSFTTLYEYLKEYKRFFDWLMDADLTQAPKIADIDLSTLEHLTKKDLEAFVLYLRERPSLNTYSTKEGLSQTTINRTLSALSSLYKYLTEEVENDQGEPYFYRNVMKKVSTKKKKETLASRAENIKQKLFLGDETLAFLDYVDKEYEQKLSNRAKSSFRKNKERDLAIIALLLASGVRLSEAVNLDLKDVNLNMMIIEVIRKGGKRDSVNVAGFAKGYLESYLAVRQRRYKAEKQDLAFFLTEYRGVPNRMDASSIEKMVGKYSEDFKIRVTPHKLRHTLATRLYDATKSQVLVSHQLGHSSTQVTDLYTHIVNDEQKNALDNL</sequence>
<feature type="chain" id="PRO_0000372671" description="Tyrosine recombinase XerS">
    <location>
        <begin position="1"/>
        <end position="356"/>
    </location>
</feature>
<feature type="domain" description="Core-binding (CB)" evidence="3">
    <location>
        <begin position="16"/>
        <end position="121"/>
    </location>
</feature>
<feature type="domain" description="Tyr recombinase" evidence="2">
    <location>
        <begin position="169"/>
        <end position="354"/>
    </location>
</feature>
<feature type="active site" evidence="1">
    <location>
        <position position="210"/>
    </location>
</feature>
<feature type="active site" evidence="1">
    <location>
        <position position="234"/>
    </location>
</feature>
<feature type="active site" evidence="1">
    <location>
        <position position="306"/>
    </location>
</feature>
<feature type="active site" evidence="1">
    <location>
        <position position="309"/>
    </location>
</feature>
<feature type="active site" evidence="1">
    <location>
        <position position="332"/>
    </location>
</feature>
<feature type="active site" description="O-(3'-phospho-DNA)-tyrosine intermediate" evidence="1">
    <location>
        <position position="341"/>
    </location>
</feature>
<gene>
    <name evidence="1" type="primary">xerS</name>
    <name type="ordered locus">MGAS2096_Spy0972</name>
</gene>
<comment type="function">
    <text evidence="1">Site-specific tyrosine recombinase, which acts by catalyzing the cutting and rejoining of the recombining DNA molecules. Essential to convert dimers of the bacterial chromosome into monomers to permit their segregation at cell division.</text>
</comment>
<comment type="activity regulation">
    <text evidence="1">FtsK is required for recombination.</text>
</comment>
<comment type="subcellular location">
    <subcellularLocation>
        <location evidence="1">Cytoplasm</location>
    </subcellularLocation>
</comment>
<comment type="similarity">
    <text evidence="1">Belongs to the 'phage' integrase family. XerS subfamily.</text>
</comment>
<comment type="sequence caution" evidence="4">
    <conflict type="erroneous initiation">
        <sequence resource="EMBL-CDS" id="ABF36024"/>
    </conflict>
</comment>
<evidence type="ECO:0000255" key="1">
    <source>
        <dbReference type="HAMAP-Rule" id="MF_01816"/>
    </source>
</evidence>
<evidence type="ECO:0000255" key="2">
    <source>
        <dbReference type="PROSITE-ProRule" id="PRU01246"/>
    </source>
</evidence>
<evidence type="ECO:0000255" key="3">
    <source>
        <dbReference type="PROSITE-ProRule" id="PRU01248"/>
    </source>
</evidence>
<evidence type="ECO:0000305" key="4"/>